<proteinExistence type="inferred from homology"/>
<reference key="1">
    <citation type="journal article" date="2011" name="J. Bacteriol.">
        <title>Complete genome sequence of the metabolically versatile plant growth-promoting endophyte, Variovorax paradoxus S110.</title>
        <authorList>
            <person name="Han J.I."/>
            <person name="Choi H.K."/>
            <person name="Lee S.W."/>
            <person name="Orwin P.M."/>
            <person name="Kim J."/>
            <person name="Laroe S.L."/>
            <person name="Kim T.G."/>
            <person name="O'Neil J."/>
            <person name="Leadbetter J.R."/>
            <person name="Lee S.Y."/>
            <person name="Hur C.G."/>
            <person name="Spain J.C."/>
            <person name="Ovchinnikova G."/>
            <person name="Goodwin L."/>
            <person name="Han C."/>
        </authorList>
    </citation>
    <scope>NUCLEOTIDE SEQUENCE [LARGE SCALE GENOMIC DNA]</scope>
    <source>
        <strain>S110</strain>
    </source>
</reference>
<dbReference type="EC" id="3.5.2.3" evidence="1"/>
<dbReference type="EMBL" id="CP001635">
    <property type="protein sequence ID" value="ACS17507.1"/>
    <property type="molecule type" value="Genomic_DNA"/>
</dbReference>
<dbReference type="SMR" id="C5CMK6"/>
<dbReference type="STRING" id="543728.Vapar_0854"/>
<dbReference type="KEGG" id="vap:Vapar_0854"/>
<dbReference type="eggNOG" id="COG0418">
    <property type="taxonomic scope" value="Bacteria"/>
</dbReference>
<dbReference type="HOGENOM" id="CLU_041558_1_0_4"/>
<dbReference type="OrthoDB" id="9808095at2"/>
<dbReference type="UniPathway" id="UPA00070">
    <property type="reaction ID" value="UER00117"/>
</dbReference>
<dbReference type="GO" id="GO:0005829">
    <property type="term" value="C:cytosol"/>
    <property type="evidence" value="ECO:0007669"/>
    <property type="project" value="TreeGrafter"/>
</dbReference>
<dbReference type="GO" id="GO:0004151">
    <property type="term" value="F:dihydroorotase activity"/>
    <property type="evidence" value="ECO:0007669"/>
    <property type="project" value="UniProtKB-UniRule"/>
</dbReference>
<dbReference type="GO" id="GO:0008270">
    <property type="term" value="F:zinc ion binding"/>
    <property type="evidence" value="ECO:0007669"/>
    <property type="project" value="UniProtKB-UniRule"/>
</dbReference>
<dbReference type="GO" id="GO:0006207">
    <property type="term" value="P:'de novo' pyrimidine nucleobase biosynthetic process"/>
    <property type="evidence" value="ECO:0007669"/>
    <property type="project" value="TreeGrafter"/>
</dbReference>
<dbReference type="GO" id="GO:0044205">
    <property type="term" value="P:'de novo' UMP biosynthetic process"/>
    <property type="evidence" value="ECO:0007669"/>
    <property type="project" value="UniProtKB-UniRule"/>
</dbReference>
<dbReference type="CDD" id="cd01294">
    <property type="entry name" value="DHOase"/>
    <property type="match status" value="1"/>
</dbReference>
<dbReference type="FunFam" id="3.20.20.140:FF:000006">
    <property type="entry name" value="Dihydroorotase"/>
    <property type="match status" value="1"/>
</dbReference>
<dbReference type="Gene3D" id="3.20.20.140">
    <property type="entry name" value="Metal-dependent hydrolases"/>
    <property type="match status" value="1"/>
</dbReference>
<dbReference type="HAMAP" id="MF_00219">
    <property type="entry name" value="PyrC_classII"/>
    <property type="match status" value="1"/>
</dbReference>
<dbReference type="InterPro" id="IPR006680">
    <property type="entry name" value="Amidohydro-rel"/>
</dbReference>
<dbReference type="InterPro" id="IPR004721">
    <property type="entry name" value="DHOdimr"/>
</dbReference>
<dbReference type="InterPro" id="IPR002195">
    <property type="entry name" value="Dihydroorotase_CS"/>
</dbReference>
<dbReference type="InterPro" id="IPR032466">
    <property type="entry name" value="Metal_Hydrolase"/>
</dbReference>
<dbReference type="NCBIfam" id="TIGR00856">
    <property type="entry name" value="pyrC_dimer"/>
    <property type="match status" value="1"/>
</dbReference>
<dbReference type="PANTHER" id="PTHR43137">
    <property type="entry name" value="DIHYDROOROTASE"/>
    <property type="match status" value="1"/>
</dbReference>
<dbReference type="PANTHER" id="PTHR43137:SF1">
    <property type="entry name" value="DIHYDROOROTASE"/>
    <property type="match status" value="1"/>
</dbReference>
<dbReference type="Pfam" id="PF01979">
    <property type="entry name" value="Amidohydro_1"/>
    <property type="match status" value="1"/>
</dbReference>
<dbReference type="PIRSF" id="PIRSF001237">
    <property type="entry name" value="DHOdimr"/>
    <property type="match status" value="1"/>
</dbReference>
<dbReference type="SUPFAM" id="SSF51556">
    <property type="entry name" value="Metallo-dependent hydrolases"/>
    <property type="match status" value="1"/>
</dbReference>
<dbReference type="PROSITE" id="PS00482">
    <property type="entry name" value="DIHYDROOROTASE_1"/>
    <property type="match status" value="1"/>
</dbReference>
<dbReference type="PROSITE" id="PS00483">
    <property type="entry name" value="DIHYDROOROTASE_2"/>
    <property type="match status" value="1"/>
</dbReference>
<sequence length="343" mass="37837">MTDTLTITRPDDWHLHVRDGAALEAVVPHSARQFGRALVMPNLRPPVTTAAQAVAYRDRIRAAVPPGTAFEPVMSLYLTDKLPPEEIALAAEAGVRALKLYPAGATTNSDAGVTDIRHTYKTLEAMQKHGLLLLVHGEVTDPAVDLFDREAVFIDRVMIPLRRDFPELKVVFEHLTTQEGAHYVRDANRFTAATITAHHLLYNRNAIFTGGIRPHYYCLPVLKRETHRVALVQAATSGSDRFFLGTDSAPHPAHLKEHALGCAGCYTALTAIELYAEAFDSVDALDKLEGFASFHGPDFYGLPRNSGTITLKRESWTVPETVPYGDATLKPLRGGETVHWKLM</sequence>
<gene>
    <name evidence="1" type="primary">pyrC</name>
    <name type="ordered locus">Vapar_0854</name>
</gene>
<comment type="function">
    <text evidence="1">Catalyzes the reversible cyclization of carbamoyl aspartate to dihydroorotate.</text>
</comment>
<comment type="catalytic activity">
    <reaction evidence="1">
        <text>(S)-dihydroorotate + H2O = N-carbamoyl-L-aspartate + H(+)</text>
        <dbReference type="Rhea" id="RHEA:24296"/>
        <dbReference type="ChEBI" id="CHEBI:15377"/>
        <dbReference type="ChEBI" id="CHEBI:15378"/>
        <dbReference type="ChEBI" id="CHEBI:30864"/>
        <dbReference type="ChEBI" id="CHEBI:32814"/>
        <dbReference type="EC" id="3.5.2.3"/>
    </reaction>
</comment>
<comment type="cofactor">
    <cofactor evidence="1">
        <name>Zn(2+)</name>
        <dbReference type="ChEBI" id="CHEBI:29105"/>
    </cofactor>
    <text evidence="1">Binds 2 Zn(2+) ions per subunit.</text>
</comment>
<comment type="pathway">
    <text evidence="1">Pyrimidine metabolism; UMP biosynthesis via de novo pathway; (S)-dihydroorotate from bicarbonate: step 3/3.</text>
</comment>
<comment type="subunit">
    <text evidence="1">Homodimer.</text>
</comment>
<comment type="similarity">
    <text evidence="1">Belongs to the metallo-dependent hydrolases superfamily. DHOase family. Class II DHOase subfamily.</text>
</comment>
<keyword id="KW-0378">Hydrolase</keyword>
<keyword id="KW-0479">Metal-binding</keyword>
<keyword id="KW-0665">Pyrimidine biosynthesis</keyword>
<keyword id="KW-0862">Zinc</keyword>
<accession>C5CMK6</accession>
<feature type="chain" id="PRO_1000204250" description="Dihydroorotase">
    <location>
        <begin position="1"/>
        <end position="343"/>
    </location>
</feature>
<feature type="active site" evidence="1">
    <location>
        <position position="247"/>
    </location>
</feature>
<feature type="binding site" evidence="1">
    <location>
        <position position="14"/>
    </location>
    <ligand>
        <name>Zn(2+)</name>
        <dbReference type="ChEBI" id="CHEBI:29105"/>
        <label>1</label>
    </ligand>
</feature>
<feature type="binding site" evidence="1">
    <location>
        <begin position="16"/>
        <end position="18"/>
    </location>
    <ligand>
        <name>substrate</name>
    </ligand>
</feature>
<feature type="binding site" evidence="1">
    <location>
        <position position="16"/>
    </location>
    <ligand>
        <name>Zn(2+)</name>
        <dbReference type="ChEBI" id="CHEBI:29105"/>
        <label>1</label>
    </ligand>
</feature>
<feature type="binding site" evidence="1">
    <location>
        <position position="42"/>
    </location>
    <ligand>
        <name>substrate</name>
    </ligand>
</feature>
<feature type="binding site" description="via carbamate group" evidence="1">
    <location>
        <position position="99"/>
    </location>
    <ligand>
        <name>Zn(2+)</name>
        <dbReference type="ChEBI" id="CHEBI:29105"/>
        <label>1</label>
    </ligand>
</feature>
<feature type="binding site" description="via carbamate group" evidence="1">
    <location>
        <position position="99"/>
    </location>
    <ligand>
        <name>Zn(2+)</name>
        <dbReference type="ChEBI" id="CHEBI:29105"/>
        <label>2</label>
    </ligand>
</feature>
<feature type="binding site" evidence="1">
    <location>
        <position position="136"/>
    </location>
    <ligand>
        <name>substrate</name>
    </ligand>
</feature>
<feature type="binding site" evidence="1">
    <location>
        <position position="136"/>
    </location>
    <ligand>
        <name>Zn(2+)</name>
        <dbReference type="ChEBI" id="CHEBI:29105"/>
        <label>2</label>
    </ligand>
</feature>
<feature type="binding site" evidence="1">
    <location>
        <position position="174"/>
    </location>
    <ligand>
        <name>Zn(2+)</name>
        <dbReference type="ChEBI" id="CHEBI:29105"/>
        <label>2</label>
    </ligand>
</feature>
<feature type="binding site" evidence="1">
    <location>
        <position position="219"/>
    </location>
    <ligand>
        <name>substrate</name>
    </ligand>
</feature>
<feature type="binding site" evidence="1">
    <location>
        <position position="247"/>
    </location>
    <ligand>
        <name>Zn(2+)</name>
        <dbReference type="ChEBI" id="CHEBI:29105"/>
        <label>1</label>
    </ligand>
</feature>
<feature type="binding site" evidence="1">
    <location>
        <position position="251"/>
    </location>
    <ligand>
        <name>substrate</name>
    </ligand>
</feature>
<feature type="binding site" evidence="1">
    <location>
        <position position="263"/>
    </location>
    <ligand>
        <name>substrate</name>
    </ligand>
</feature>
<feature type="modified residue" description="N6-carboxylysine" evidence="1">
    <location>
        <position position="99"/>
    </location>
</feature>
<organism>
    <name type="scientific">Variovorax paradoxus (strain S110)</name>
    <dbReference type="NCBI Taxonomy" id="543728"/>
    <lineage>
        <taxon>Bacteria</taxon>
        <taxon>Pseudomonadati</taxon>
        <taxon>Pseudomonadota</taxon>
        <taxon>Betaproteobacteria</taxon>
        <taxon>Burkholderiales</taxon>
        <taxon>Comamonadaceae</taxon>
        <taxon>Variovorax</taxon>
    </lineage>
</organism>
<evidence type="ECO:0000255" key="1">
    <source>
        <dbReference type="HAMAP-Rule" id="MF_00219"/>
    </source>
</evidence>
<protein>
    <recommendedName>
        <fullName evidence="1">Dihydroorotase</fullName>
        <shortName evidence="1">DHOase</shortName>
        <ecNumber evidence="1">3.5.2.3</ecNumber>
    </recommendedName>
</protein>
<name>PYRC_VARPS</name>